<comment type="function">
    <text evidence="1">Catalyzes a salvage reaction resulting in the formation of AMP, that is energically less costly than de novo synthesis.</text>
</comment>
<comment type="catalytic activity">
    <reaction evidence="1">
        <text>AMP + diphosphate = 5-phospho-alpha-D-ribose 1-diphosphate + adenine</text>
        <dbReference type="Rhea" id="RHEA:16609"/>
        <dbReference type="ChEBI" id="CHEBI:16708"/>
        <dbReference type="ChEBI" id="CHEBI:33019"/>
        <dbReference type="ChEBI" id="CHEBI:58017"/>
        <dbReference type="ChEBI" id="CHEBI:456215"/>
        <dbReference type="EC" id="2.4.2.7"/>
    </reaction>
</comment>
<comment type="pathway">
    <text evidence="1">Purine metabolism; AMP biosynthesis via salvage pathway; AMP from adenine: step 1/1.</text>
</comment>
<comment type="subunit">
    <text evidence="1">Homodimer.</text>
</comment>
<comment type="subcellular location">
    <subcellularLocation>
        <location evidence="1">Cytoplasm</location>
    </subcellularLocation>
</comment>
<comment type="similarity">
    <text evidence="1">Belongs to the purine/pyrimidine phosphoribosyltransferase family.</text>
</comment>
<dbReference type="EC" id="2.4.2.7" evidence="1"/>
<dbReference type="EMBL" id="CP000698">
    <property type="protein sequence ID" value="ABQ26793.1"/>
    <property type="molecule type" value="Genomic_DNA"/>
</dbReference>
<dbReference type="RefSeq" id="WP_011939470.1">
    <property type="nucleotide sequence ID" value="NC_009483.1"/>
</dbReference>
<dbReference type="SMR" id="A5G4S5"/>
<dbReference type="STRING" id="351605.Gura_2616"/>
<dbReference type="KEGG" id="gur:Gura_2616"/>
<dbReference type="HOGENOM" id="CLU_063339_3_0_7"/>
<dbReference type="OrthoDB" id="9803963at2"/>
<dbReference type="UniPathway" id="UPA00588">
    <property type="reaction ID" value="UER00646"/>
</dbReference>
<dbReference type="Proteomes" id="UP000006695">
    <property type="component" value="Chromosome"/>
</dbReference>
<dbReference type="GO" id="GO:0005737">
    <property type="term" value="C:cytoplasm"/>
    <property type="evidence" value="ECO:0007669"/>
    <property type="project" value="UniProtKB-SubCell"/>
</dbReference>
<dbReference type="GO" id="GO:0002055">
    <property type="term" value="F:adenine binding"/>
    <property type="evidence" value="ECO:0007669"/>
    <property type="project" value="TreeGrafter"/>
</dbReference>
<dbReference type="GO" id="GO:0003999">
    <property type="term" value="F:adenine phosphoribosyltransferase activity"/>
    <property type="evidence" value="ECO:0007669"/>
    <property type="project" value="UniProtKB-UniRule"/>
</dbReference>
<dbReference type="GO" id="GO:0016208">
    <property type="term" value="F:AMP binding"/>
    <property type="evidence" value="ECO:0007669"/>
    <property type="project" value="TreeGrafter"/>
</dbReference>
<dbReference type="GO" id="GO:0006168">
    <property type="term" value="P:adenine salvage"/>
    <property type="evidence" value="ECO:0007669"/>
    <property type="project" value="InterPro"/>
</dbReference>
<dbReference type="GO" id="GO:0044209">
    <property type="term" value="P:AMP salvage"/>
    <property type="evidence" value="ECO:0007669"/>
    <property type="project" value="UniProtKB-UniRule"/>
</dbReference>
<dbReference type="GO" id="GO:0006166">
    <property type="term" value="P:purine ribonucleoside salvage"/>
    <property type="evidence" value="ECO:0007669"/>
    <property type="project" value="UniProtKB-KW"/>
</dbReference>
<dbReference type="CDD" id="cd06223">
    <property type="entry name" value="PRTases_typeI"/>
    <property type="match status" value="1"/>
</dbReference>
<dbReference type="FunFam" id="3.40.50.2020:FF:000021">
    <property type="entry name" value="Adenine phosphoribosyltransferase"/>
    <property type="match status" value="1"/>
</dbReference>
<dbReference type="Gene3D" id="3.40.50.2020">
    <property type="match status" value="1"/>
</dbReference>
<dbReference type="HAMAP" id="MF_00004">
    <property type="entry name" value="Aden_phosphoribosyltr"/>
    <property type="match status" value="1"/>
</dbReference>
<dbReference type="InterPro" id="IPR005764">
    <property type="entry name" value="Ade_phspho_trans"/>
</dbReference>
<dbReference type="InterPro" id="IPR000836">
    <property type="entry name" value="PRibTrfase_dom"/>
</dbReference>
<dbReference type="InterPro" id="IPR029057">
    <property type="entry name" value="PRTase-like"/>
</dbReference>
<dbReference type="InterPro" id="IPR050054">
    <property type="entry name" value="UPRTase/APRTase"/>
</dbReference>
<dbReference type="NCBIfam" id="TIGR01090">
    <property type="entry name" value="apt"/>
    <property type="match status" value="1"/>
</dbReference>
<dbReference type="NCBIfam" id="NF002634">
    <property type="entry name" value="PRK02304.1-3"/>
    <property type="match status" value="1"/>
</dbReference>
<dbReference type="NCBIfam" id="NF002636">
    <property type="entry name" value="PRK02304.1-5"/>
    <property type="match status" value="1"/>
</dbReference>
<dbReference type="PANTHER" id="PTHR32315">
    <property type="entry name" value="ADENINE PHOSPHORIBOSYLTRANSFERASE"/>
    <property type="match status" value="1"/>
</dbReference>
<dbReference type="PANTHER" id="PTHR32315:SF3">
    <property type="entry name" value="ADENINE PHOSPHORIBOSYLTRANSFERASE"/>
    <property type="match status" value="1"/>
</dbReference>
<dbReference type="Pfam" id="PF00156">
    <property type="entry name" value="Pribosyltran"/>
    <property type="match status" value="1"/>
</dbReference>
<dbReference type="SUPFAM" id="SSF53271">
    <property type="entry name" value="PRTase-like"/>
    <property type="match status" value="1"/>
</dbReference>
<organism>
    <name type="scientific">Geotalea uraniireducens (strain Rf4)</name>
    <name type="common">Geobacter uraniireducens</name>
    <dbReference type="NCBI Taxonomy" id="351605"/>
    <lineage>
        <taxon>Bacteria</taxon>
        <taxon>Pseudomonadati</taxon>
        <taxon>Thermodesulfobacteriota</taxon>
        <taxon>Desulfuromonadia</taxon>
        <taxon>Geobacterales</taxon>
        <taxon>Geobacteraceae</taxon>
        <taxon>Geotalea</taxon>
    </lineage>
</organism>
<name>APT_GEOUR</name>
<keyword id="KW-0963">Cytoplasm</keyword>
<keyword id="KW-0328">Glycosyltransferase</keyword>
<keyword id="KW-0660">Purine salvage</keyword>
<keyword id="KW-1185">Reference proteome</keyword>
<keyword id="KW-0808">Transferase</keyword>
<sequence length="171" mass="18788">MDELKNIIRDIPDFPKKGIIFKDITTLLADAASYQRMVDLLSHRYIGKKIDKVVGVEARGFIIGAALAYKLGAGIVLVRKPGKLPSETFKKSYELEYGTDTLEIHTDAIEKGERVLIADDLLATGGTMAAVVDMVSSMGAELVECCFMAELEFLNGKNKLPADKVFSLLKF</sequence>
<protein>
    <recommendedName>
        <fullName evidence="1">Adenine phosphoribosyltransferase</fullName>
        <shortName evidence="1">APRT</shortName>
        <ecNumber evidence="1">2.4.2.7</ecNumber>
    </recommendedName>
</protein>
<reference key="1">
    <citation type="submission" date="2007-05" db="EMBL/GenBank/DDBJ databases">
        <title>Complete sequence of Geobacter uraniireducens Rf4.</title>
        <authorList>
            <consortium name="US DOE Joint Genome Institute"/>
            <person name="Copeland A."/>
            <person name="Lucas S."/>
            <person name="Lapidus A."/>
            <person name="Barry K."/>
            <person name="Detter J.C."/>
            <person name="Glavina del Rio T."/>
            <person name="Hammon N."/>
            <person name="Israni S."/>
            <person name="Dalin E."/>
            <person name="Tice H."/>
            <person name="Pitluck S."/>
            <person name="Chertkov O."/>
            <person name="Brettin T."/>
            <person name="Bruce D."/>
            <person name="Han C."/>
            <person name="Schmutz J."/>
            <person name="Larimer F."/>
            <person name="Land M."/>
            <person name="Hauser L."/>
            <person name="Kyrpides N."/>
            <person name="Mikhailova N."/>
            <person name="Shelobolina E."/>
            <person name="Aklujkar M."/>
            <person name="Lovley D."/>
            <person name="Richardson P."/>
        </authorList>
    </citation>
    <scope>NUCLEOTIDE SEQUENCE [LARGE SCALE GENOMIC DNA]</scope>
    <source>
        <strain>ATCC BAA-1134 / JCM 13001 / Rf4</strain>
    </source>
</reference>
<evidence type="ECO:0000255" key="1">
    <source>
        <dbReference type="HAMAP-Rule" id="MF_00004"/>
    </source>
</evidence>
<gene>
    <name evidence="1" type="primary">apt</name>
    <name type="ordered locus">Gura_2616</name>
</gene>
<accession>A5G4S5</accession>
<feature type="chain" id="PRO_1000073794" description="Adenine phosphoribosyltransferase">
    <location>
        <begin position="1"/>
        <end position="171"/>
    </location>
</feature>
<proteinExistence type="inferred from homology"/>